<accession>Q0I458</accession>
<keyword id="KW-0687">Ribonucleoprotein</keyword>
<keyword id="KW-0689">Ribosomal protein</keyword>
<proteinExistence type="inferred from homology"/>
<comment type="similarity">
    <text evidence="1">Belongs to the universal ribosomal protein uS2 family.</text>
</comment>
<name>RS2_HISS1</name>
<reference key="1">
    <citation type="journal article" date="2007" name="J. Bacteriol.">
        <title>Complete genome sequence of Haemophilus somnus (Histophilus somni) strain 129Pt and comparison to Haemophilus ducreyi 35000HP and Haemophilus influenzae Rd.</title>
        <authorList>
            <person name="Challacombe J.F."/>
            <person name="Duncan A.J."/>
            <person name="Brettin T.S."/>
            <person name="Bruce D."/>
            <person name="Chertkov O."/>
            <person name="Detter J.C."/>
            <person name="Han C.S."/>
            <person name="Misra M."/>
            <person name="Richardson P."/>
            <person name="Tapia R."/>
            <person name="Thayer N."/>
            <person name="Xie G."/>
            <person name="Inzana T.J."/>
        </authorList>
    </citation>
    <scope>NUCLEOTIDE SEQUENCE [LARGE SCALE GENOMIC DNA]</scope>
    <source>
        <strain>129Pt</strain>
    </source>
</reference>
<dbReference type="EMBL" id="CP000436">
    <property type="protein sequence ID" value="ABI25363.1"/>
    <property type="molecule type" value="Genomic_DNA"/>
</dbReference>
<dbReference type="SMR" id="Q0I458"/>
<dbReference type="KEGG" id="hso:HS_1088"/>
<dbReference type="eggNOG" id="COG0052">
    <property type="taxonomic scope" value="Bacteria"/>
</dbReference>
<dbReference type="HOGENOM" id="CLU_040318_1_2_6"/>
<dbReference type="GO" id="GO:0022627">
    <property type="term" value="C:cytosolic small ribosomal subunit"/>
    <property type="evidence" value="ECO:0007669"/>
    <property type="project" value="TreeGrafter"/>
</dbReference>
<dbReference type="GO" id="GO:0003735">
    <property type="term" value="F:structural constituent of ribosome"/>
    <property type="evidence" value="ECO:0007669"/>
    <property type="project" value="InterPro"/>
</dbReference>
<dbReference type="GO" id="GO:0006412">
    <property type="term" value="P:translation"/>
    <property type="evidence" value="ECO:0007669"/>
    <property type="project" value="UniProtKB-UniRule"/>
</dbReference>
<dbReference type="CDD" id="cd01425">
    <property type="entry name" value="RPS2"/>
    <property type="match status" value="1"/>
</dbReference>
<dbReference type="FunFam" id="1.10.287.610:FF:000001">
    <property type="entry name" value="30S ribosomal protein S2"/>
    <property type="match status" value="1"/>
</dbReference>
<dbReference type="Gene3D" id="3.40.50.10490">
    <property type="entry name" value="Glucose-6-phosphate isomerase like protein, domain 1"/>
    <property type="match status" value="1"/>
</dbReference>
<dbReference type="Gene3D" id="1.10.287.610">
    <property type="entry name" value="Helix hairpin bin"/>
    <property type="match status" value="1"/>
</dbReference>
<dbReference type="HAMAP" id="MF_00291_B">
    <property type="entry name" value="Ribosomal_uS2_B"/>
    <property type="match status" value="1"/>
</dbReference>
<dbReference type="InterPro" id="IPR001865">
    <property type="entry name" value="Ribosomal_uS2"/>
</dbReference>
<dbReference type="InterPro" id="IPR005706">
    <property type="entry name" value="Ribosomal_uS2_bac/mit/plastid"/>
</dbReference>
<dbReference type="InterPro" id="IPR018130">
    <property type="entry name" value="Ribosomal_uS2_CS"/>
</dbReference>
<dbReference type="InterPro" id="IPR023591">
    <property type="entry name" value="Ribosomal_uS2_flav_dom_sf"/>
</dbReference>
<dbReference type="NCBIfam" id="TIGR01011">
    <property type="entry name" value="rpsB_bact"/>
    <property type="match status" value="1"/>
</dbReference>
<dbReference type="PANTHER" id="PTHR12534">
    <property type="entry name" value="30S RIBOSOMAL PROTEIN S2 PROKARYOTIC AND ORGANELLAR"/>
    <property type="match status" value="1"/>
</dbReference>
<dbReference type="PANTHER" id="PTHR12534:SF0">
    <property type="entry name" value="SMALL RIBOSOMAL SUBUNIT PROTEIN US2M"/>
    <property type="match status" value="1"/>
</dbReference>
<dbReference type="Pfam" id="PF00318">
    <property type="entry name" value="Ribosomal_S2"/>
    <property type="match status" value="1"/>
</dbReference>
<dbReference type="PRINTS" id="PR00395">
    <property type="entry name" value="RIBOSOMALS2"/>
</dbReference>
<dbReference type="SUPFAM" id="SSF52313">
    <property type="entry name" value="Ribosomal protein S2"/>
    <property type="match status" value="1"/>
</dbReference>
<dbReference type="PROSITE" id="PS00962">
    <property type="entry name" value="RIBOSOMAL_S2_1"/>
    <property type="match status" value="1"/>
</dbReference>
<dbReference type="PROSITE" id="PS00963">
    <property type="entry name" value="RIBOSOMAL_S2_2"/>
    <property type="match status" value="1"/>
</dbReference>
<evidence type="ECO:0000255" key="1">
    <source>
        <dbReference type="HAMAP-Rule" id="MF_00291"/>
    </source>
</evidence>
<evidence type="ECO:0000305" key="2"/>
<protein>
    <recommendedName>
        <fullName evidence="1">Small ribosomal subunit protein uS2</fullName>
    </recommendedName>
    <alternativeName>
        <fullName evidence="2">30S ribosomal protein S2</fullName>
    </alternativeName>
</protein>
<feature type="chain" id="PRO_1000003973" description="Small ribosomal subunit protein uS2">
    <location>
        <begin position="1"/>
        <end position="239"/>
    </location>
</feature>
<gene>
    <name evidence="1" type="primary">rpsB</name>
    <name type="ordered locus">HS_1088</name>
</gene>
<organism>
    <name type="scientific">Histophilus somni (strain 129Pt)</name>
    <name type="common">Haemophilus somnus</name>
    <dbReference type="NCBI Taxonomy" id="205914"/>
    <lineage>
        <taxon>Bacteria</taxon>
        <taxon>Pseudomonadati</taxon>
        <taxon>Pseudomonadota</taxon>
        <taxon>Gammaproteobacteria</taxon>
        <taxon>Pasteurellales</taxon>
        <taxon>Pasteurellaceae</taxon>
        <taxon>Histophilus</taxon>
    </lineage>
</organism>
<sequence>MAQVSMRDMLQAGVHFGHQTRYWNPKMKPFIFGPRNGVHIINLEKTVPMFNEALVELTRIASNNGRILFVGTKRAASEVVKAAALDCQQYYVNHRWLGGMLTNWKTVRQSIKRLKDLETQSQDGTFDKLTKKEALVRTREMEKLELSLGGIKDMGGLPDAIFVIGADHEHIAIKEANNLGIPVFAIVDTNSSPDGVDFVIPGNDDASRAIQLYLSAATTAVKEGRNQETVTEEVFAAAE</sequence>